<sequence length="144" mass="15256">MAKKKIEAIIKLQVAAGKANPSPPIGPALGQHGVNIMGFCKEFNAKTQGMEPGMPIPVEISVYSDRSFTFEMKTPPASYLIKKAINVKSGSSKPSKEFVGTITRAQLEEIAKVKDPDLTAADLDAAVRIIAGSARSMGVKVEGV</sequence>
<proteinExistence type="inferred from homology"/>
<accession>Q5NID6</accession>
<comment type="function">
    <text evidence="1">Forms part of the ribosomal stalk which helps the ribosome interact with GTP-bound translation factors.</text>
</comment>
<comment type="subunit">
    <text evidence="1">Part of the ribosomal stalk of the 50S ribosomal subunit. Interacts with L10 and the large rRNA to form the base of the stalk. L10 forms an elongated spine to which L12 dimers bind in a sequential fashion forming a multimeric L10(L12)X complex.</text>
</comment>
<comment type="PTM">
    <text evidence="1">One or more lysine residues are methylated.</text>
</comment>
<comment type="similarity">
    <text evidence="1">Belongs to the universal ribosomal protein uL11 family.</text>
</comment>
<keyword id="KW-0488">Methylation</keyword>
<keyword id="KW-1185">Reference proteome</keyword>
<keyword id="KW-0687">Ribonucleoprotein</keyword>
<keyword id="KW-0689">Ribosomal protein</keyword>
<keyword id="KW-0694">RNA-binding</keyword>
<keyword id="KW-0699">rRNA-binding</keyword>
<dbReference type="EMBL" id="AJ749949">
    <property type="protein sequence ID" value="CAG44773.1"/>
    <property type="molecule type" value="Genomic_DNA"/>
</dbReference>
<dbReference type="RefSeq" id="WP_003024803.1">
    <property type="nucleotide sequence ID" value="NZ_CP010290.1"/>
</dbReference>
<dbReference type="RefSeq" id="YP_169206.1">
    <property type="nucleotide sequence ID" value="NC_006570.2"/>
</dbReference>
<dbReference type="SMR" id="Q5NID6"/>
<dbReference type="STRING" id="177416.FTT_0140"/>
<dbReference type="DNASU" id="3192014"/>
<dbReference type="EnsemblBacteria" id="CAG44773">
    <property type="protein sequence ID" value="CAG44773"/>
    <property type="gene ID" value="FTT_0140"/>
</dbReference>
<dbReference type="GeneID" id="75264696"/>
<dbReference type="KEGG" id="ftu:FTT_0140"/>
<dbReference type="eggNOG" id="COG0080">
    <property type="taxonomic scope" value="Bacteria"/>
</dbReference>
<dbReference type="OrthoDB" id="9802408at2"/>
<dbReference type="Proteomes" id="UP000001174">
    <property type="component" value="Chromosome"/>
</dbReference>
<dbReference type="GO" id="GO:0022625">
    <property type="term" value="C:cytosolic large ribosomal subunit"/>
    <property type="evidence" value="ECO:0007669"/>
    <property type="project" value="TreeGrafter"/>
</dbReference>
<dbReference type="GO" id="GO:0070180">
    <property type="term" value="F:large ribosomal subunit rRNA binding"/>
    <property type="evidence" value="ECO:0007669"/>
    <property type="project" value="UniProtKB-UniRule"/>
</dbReference>
<dbReference type="GO" id="GO:0003735">
    <property type="term" value="F:structural constituent of ribosome"/>
    <property type="evidence" value="ECO:0007669"/>
    <property type="project" value="InterPro"/>
</dbReference>
<dbReference type="GO" id="GO:0006412">
    <property type="term" value="P:translation"/>
    <property type="evidence" value="ECO:0007669"/>
    <property type="project" value="UniProtKB-UniRule"/>
</dbReference>
<dbReference type="CDD" id="cd00349">
    <property type="entry name" value="Ribosomal_L11"/>
    <property type="match status" value="1"/>
</dbReference>
<dbReference type="FunFam" id="1.10.10.250:FF:000001">
    <property type="entry name" value="50S ribosomal protein L11"/>
    <property type="match status" value="1"/>
</dbReference>
<dbReference type="FunFam" id="3.30.1550.10:FF:000001">
    <property type="entry name" value="50S ribosomal protein L11"/>
    <property type="match status" value="1"/>
</dbReference>
<dbReference type="Gene3D" id="1.10.10.250">
    <property type="entry name" value="Ribosomal protein L11, C-terminal domain"/>
    <property type="match status" value="1"/>
</dbReference>
<dbReference type="Gene3D" id="3.30.1550.10">
    <property type="entry name" value="Ribosomal protein L11/L12, N-terminal domain"/>
    <property type="match status" value="1"/>
</dbReference>
<dbReference type="HAMAP" id="MF_00736">
    <property type="entry name" value="Ribosomal_uL11"/>
    <property type="match status" value="1"/>
</dbReference>
<dbReference type="InterPro" id="IPR000911">
    <property type="entry name" value="Ribosomal_uL11"/>
</dbReference>
<dbReference type="InterPro" id="IPR006519">
    <property type="entry name" value="Ribosomal_uL11_bac-typ"/>
</dbReference>
<dbReference type="InterPro" id="IPR020783">
    <property type="entry name" value="Ribosomal_uL11_C"/>
</dbReference>
<dbReference type="InterPro" id="IPR036769">
    <property type="entry name" value="Ribosomal_uL11_C_sf"/>
</dbReference>
<dbReference type="InterPro" id="IPR020785">
    <property type="entry name" value="Ribosomal_uL11_CS"/>
</dbReference>
<dbReference type="InterPro" id="IPR020784">
    <property type="entry name" value="Ribosomal_uL11_N"/>
</dbReference>
<dbReference type="InterPro" id="IPR036796">
    <property type="entry name" value="Ribosomal_uL11_N_sf"/>
</dbReference>
<dbReference type="NCBIfam" id="TIGR01632">
    <property type="entry name" value="L11_bact"/>
    <property type="match status" value="1"/>
</dbReference>
<dbReference type="PANTHER" id="PTHR11661">
    <property type="entry name" value="60S RIBOSOMAL PROTEIN L12"/>
    <property type="match status" value="1"/>
</dbReference>
<dbReference type="PANTHER" id="PTHR11661:SF1">
    <property type="entry name" value="LARGE RIBOSOMAL SUBUNIT PROTEIN UL11M"/>
    <property type="match status" value="1"/>
</dbReference>
<dbReference type="Pfam" id="PF00298">
    <property type="entry name" value="Ribosomal_L11"/>
    <property type="match status" value="1"/>
</dbReference>
<dbReference type="Pfam" id="PF03946">
    <property type="entry name" value="Ribosomal_L11_N"/>
    <property type="match status" value="1"/>
</dbReference>
<dbReference type="SMART" id="SM00649">
    <property type="entry name" value="RL11"/>
    <property type="match status" value="1"/>
</dbReference>
<dbReference type="SUPFAM" id="SSF54747">
    <property type="entry name" value="Ribosomal L11/L12e N-terminal domain"/>
    <property type="match status" value="1"/>
</dbReference>
<dbReference type="SUPFAM" id="SSF46906">
    <property type="entry name" value="Ribosomal protein L11, C-terminal domain"/>
    <property type="match status" value="1"/>
</dbReference>
<dbReference type="PROSITE" id="PS00359">
    <property type="entry name" value="RIBOSOMAL_L11"/>
    <property type="match status" value="1"/>
</dbReference>
<evidence type="ECO:0000255" key="1">
    <source>
        <dbReference type="HAMAP-Rule" id="MF_00736"/>
    </source>
</evidence>
<evidence type="ECO:0000305" key="2"/>
<feature type="chain" id="PRO_0000104288" description="Large ribosomal subunit protein uL11">
    <location>
        <begin position="1"/>
        <end position="144"/>
    </location>
</feature>
<name>RL11_FRATT</name>
<protein>
    <recommendedName>
        <fullName evidence="1">Large ribosomal subunit protein uL11</fullName>
    </recommendedName>
    <alternativeName>
        <fullName evidence="2">50S ribosomal protein L11</fullName>
    </alternativeName>
</protein>
<organism>
    <name type="scientific">Francisella tularensis subsp. tularensis (strain SCHU S4 / Schu 4)</name>
    <dbReference type="NCBI Taxonomy" id="177416"/>
    <lineage>
        <taxon>Bacteria</taxon>
        <taxon>Pseudomonadati</taxon>
        <taxon>Pseudomonadota</taxon>
        <taxon>Gammaproteobacteria</taxon>
        <taxon>Thiotrichales</taxon>
        <taxon>Francisellaceae</taxon>
        <taxon>Francisella</taxon>
    </lineage>
</organism>
<gene>
    <name evidence="1" type="primary">rplK</name>
    <name type="ordered locus">FTT_0140</name>
</gene>
<reference key="1">
    <citation type="journal article" date="2005" name="Nat. Genet.">
        <title>The complete genome sequence of Francisella tularensis, the causative agent of tularemia.</title>
        <authorList>
            <person name="Larsson P."/>
            <person name="Oyston P.C.F."/>
            <person name="Chain P."/>
            <person name="Chu M.C."/>
            <person name="Duffield M."/>
            <person name="Fuxelius H.-H."/>
            <person name="Garcia E."/>
            <person name="Haelltorp G."/>
            <person name="Johansson D."/>
            <person name="Isherwood K.E."/>
            <person name="Karp P.D."/>
            <person name="Larsson E."/>
            <person name="Liu Y."/>
            <person name="Michell S."/>
            <person name="Prior J."/>
            <person name="Prior R."/>
            <person name="Malfatti S."/>
            <person name="Sjoestedt A."/>
            <person name="Svensson K."/>
            <person name="Thompson N."/>
            <person name="Vergez L."/>
            <person name="Wagg J.K."/>
            <person name="Wren B.W."/>
            <person name="Lindler L.E."/>
            <person name="Andersson S.G.E."/>
            <person name="Forsman M."/>
            <person name="Titball R.W."/>
        </authorList>
    </citation>
    <scope>NUCLEOTIDE SEQUENCE [LARGE SCALE GENOMIC DNA]</scope>
    <source>
        <strain>SCHU S4 / Schu 4</strain>
    </source>
</reference>